<name>RL35_CUPPJ</name>
<gene>
    <name evidence="1" type="primary">rpmI</name>
    <name type="ordered locus">Reut_A1277</name>
</gene>
<proteinExistence type="inferred from homology"/>
<reference key="1">
    <citation type="journal article" date="2010" name="PLoS ONE">
        <title>The complete multipartite genome sequence of Cupriavidus necator JMP134, a versatile pollutant degrader.</title>
        <authorList>
            <person name="Lykidis A."/>
            <person name="Perez-Pantoja D."/>
            <person name="Ledger T."/>
            <person name="Mavromatis K."/>
            <person name="Anderson I.J."/>
            <person name="Ivanova N.N."/>
            <person name="Hooper S.D."/>
            <person name="Lapidus A."/>
            <person name="Lucas S."/>
            <person name="Gonzalez B."/>
            <person name="Kyrpides N.C."/>
        </authorList>
    </citation>
    <scope>NUCLEOTIDE SEQUENCE [LARGE SCALE GENOMIC DNA]</scope>
    <source>
        <strain>JMP134 / LMG 1197</strain>
    </source>
</reference>
<organism>
    <name type="scientific">Cupriavidus pinatubonensis (strain JMP 134 / LMG 1197)</name>
    <name type="common">Cupriavidus necator (strain JMP 134)</name>
    <dbReference type="NCBI Taxonomy" id="264198"/>
    <lineage>
        <taxon>Bacteria</taxon>
        <taxon>Pseudomonadati</taxon>
        <taxon>Pseudomonadota</taxon>
        <taxon>Betaproteobacteria</taxon>
        <taxon>Burkholderiales</taxon>
        <taxon>Burkholderiaceae</taxon>
        <taxon>Cupriavidus</taxon>
    </lineage>
</organism>
<comment type="similarity">
    <text evidence="1">Belongs to the bacterial ribosomal protein bL35 family.</text>
</comment>
<feature type="chain" id="PRO_0000258732" description="Large ribosomal subunit protein bL35">
    <location>
        <begin position="1"/>
        <end position="65"/>
    </location>
</feature>
<feature type="region of interest" description="Disordered" evidence="2">
    <location>
        <begin position="1"/>
        <end position="27"/>
    </location>
</feature>
<feature type="compositionally biased region" description="Basic residues" evidence="2">
    <location>
        <begin position="1"/>
        <end position="15"/>
    </location>
</feature>
<accession>Q472N6</accession>
<protein>
    <recommendedName>
        <fullName evidence="1">Large ribosomal subunit protein bL35</fullName>
    </recommendedName>
    <alternativeName>
        <fullName evidence="3">50S ribosomal protein L35</fullName>
    </alternativeName>
</protein>
<dbReference type="EMBL" id="CP000090">
    <property type="protein sequence ID" value="AAZ60647.1"/>
    <property type="molecule type" value="Genomic_DNA"/>
</dbReference>
<dbReference type="SMR" id="Q472N6"/>
<dbReference type="STRING" id="264198.Reut_A1277"/>
<dbReference type="KEGG" id="reu:Reut_A1277"/>
<dbReference type="eggNOG" id="COG0291">
    <property type="taxonomic scope" value="Bacteria"/>
</dbReference>
<dbReference type="HOGENOM" id="CLU_169643_1_0_4"/>
<dbReference type="OrthoDB" id="47476at2"/>
<dbReference type="GO" id="GO:0022625">
    <property type="term" value="C:cytosolic large ribosomal subunit"/>
    <property type="evidence" value="ECO:0007669"/>
    <property type="project" value="TreeGrafter"/>
</dbReference>
<dbReference type="GO" id="GO:0003735">
    <property type="term" value="F:structural constituent of ribosome"/>
    <property type="evidence" value="ECO:0007669"/>
    <property type="project" value="InterPro"/>
</dbReference>
<dbReference type="GO" id="GO:0006412">
    <property type="term" value="P:translation"/>
    <property type="evidence" value="ECO:0007669"/>
    <property type="project" value="UniProtKB-UniRule"/>
</dbReference>
<dbReference type="FunFam" id="4.10.410.60:FF:000001">
    <property type="entry name" value="50S ribosomal protein L35"/>
    <property type="match status" value="1"/>
</dbReference>
<dbReference type="Gene3D" id="4.10.410.60">
    <property type="match status" value="1"/>
</dbReference>
<dbReference type="HAMAP" id="MF_00514">
    <property type="entry name" value="Ribosomal_bL35"/>
    <property type="match status" value="1"/>
</dbReference>
<dbReference type="InterPro" id="IPR001706">
    <property type="entry name" value="Ribosomal_bL35"/>
</dbReference>
<dbReference type="InterPro" id="IPR021137">
    <property type="entry name" value="Ribosomal_bL35-like"/>
</dbReference>
<dbReference type="InterPro" id="IPR018265">
    <property type="entry name" value="Ribosomal_bL35_CS"/>
</dbReference>
<dbReference type="InterPro" id="IPR037229">
    <property type="entry name" value="Ribosomal_bL35_sf"/>
</dbReference>
<dbReference type="NCBIfam" id="TIGR00001">
    <property type="entry name" value="rpmI_bact"/>
    <property type="match status" value="1"/>
</dbReference>
<dbReference type="PANTHER" id="PTHR33343">
    <property type="entry name" value="54S RIBOSOMAL PROTEIN BL35M"/>
    <property type="match status" value="1"/>
</dbReference>
<dbReference type="PANTHER" id="PTHR33343:SF1">
    <property type="entry name" value="LARGE RIBOSOMAL SUBUNIT PROTEIN BL35M"/>
    <property type="match status" value="1"/>
</dbReference>
<dbReference type="Pfam" id="PF01632">
    <property type="entry name" value="Ribosomal_L35p"/>
    <property type="match status" value="1"/>
</dbReference>
<dbReference type="PRINTS" id="PR00064">
    <property type="entry name" value="RIBOSOMALL35"/>
</dbReference>
<dbReference type="SUPFAM" id="SSF143034">
    <property type="entry name" value="L35p-like"/>
    <property type="match status" value="1"/>
</dbReference>
<dbReference type="PROSITE" id="PS00936">
    <property type="entry name" value="RIBOSOMAL_L35"/>
    <property type="match status" value="1"/>
</dbReference>
<evidence type="ECO:0000255" key="1">
    <source>
        <dbReference type="HAMAP-Rule" id="MF_00514"/>
    </source>
</evidence>
<evidence type="ECO:0000256" key="2">
    <source>
        <dbReference type="SAM" id="MobiDB-lite"/>
    </source>
</evidence>
<evidence type="ECO:0000305" key="3"/>
<keyword id="KW-0687">Ribonucleoprotein</keyword>
<keyword id="KW-0689">Ribosomal protein</keyword>
<sequence length="65" mass="7558">MPKMKTKKSASKRFTARPNGSFKRGQAFKRHILTKKTTKNKRHLRGTQDVHETNLKSVRAMMPYA</sequence>